<comment type="function">
    <text>Involved in the cellular defense against the biological effects of O6-methylguanine (O6-MeG) and O4-methylthymine (O4-MeT) in DNA. Repairs the methylated nucleobase in DNA by stoichiometrically transferring the methyl group to a cysteine residue in the enzyme. This is a suicide reaction: the enzyme is irreversibly inactivated.</text>
</comment>
<comment type="catalytic activity">
    <reaction evidence="1">
        <text>a 6-O-methyl-2'-deoxyguanosine in DNA + L-cysteinyl-[protein] = S-methyl-L-cysteinyl-[protein] + a 2'-deoxyguanosine in DNA</text>
        <dbReference type="Rhea" id="RHEA:24000"/>
        <dbReference type="Rhea" id="RHEA-COMP:10131"/>
        <dbReference type="Rhea" id="RHEA-COMP:10132"/>
        <dbReference type="Rhea" id="RHEA-COMP:11367"/>
        <dbReference type="Rhea" id="RHEA-COMP:11368"/>
        <dbReference type="ChEBI" id="CHEBI:29950"/>
        <dbReference type="ChEBI" id="CHEBI:82612"/>
        <dbReference type="ChEBI" id="CHEBI:85445"/>
        <dbReference type="ChEBI" id="CHEBI:85448"/>
        <dbReference type="EC" id="2.1.1.63"/>
    </reaction>
</comment>
<comment type="catalytic activity">
    <reaction evidence="1">
        <text>a 4-O-methyl-thymidine in DNA + L-cysteinyl-[protein] = a thymidine in DNA + S-methyl-L-cysteinyl-[protein]</text>
        <dbReference type="Rhea" id="RHEA:53428"/>
        <dbReference type="Rhea" id="RHEA-COMP:10131"/>
        <dbReference type="Rhea" id="RHEA-COMP:10132"/>
        <dbReference type="Rhea" id="RHEA-COMP:13555"/>
        <dbReference type="Rhea" id="RHEA-COMP:13556"/>
        <dbReference type="ChEBI" id="CHEBI:29950"/>
        <dbReference type="ChEBI" id="CHEBI:82612"/>
        <dbReference type="ChEBI" id="CHEBI:137386"/>
        <dbReference type="ChEBI" id="CHEBI:137387"/>
        <dbReference type="EC" id="2.1.1.63"/>
    </reaction>
</comment>
<comment type="cofactor">
    <cofactor>
        <name>Zn(2+)</name>
        <dbReference type="ChEBI" id="CHEBI:29105"/>
    </cofactor>
    <text>Binds 1 zinc ion.</text>
</comment>
<comment type="subcellular location">
    <subcellularLocation>
        <location>Nucleus</location>
    </subcellularLocation>
</comment>
<comment type="miscellaneous">
    <text>This enzyme catalyzes only one turnover and therefore is not strictly catalytic. According to one definition, an enzyme is a biocatalyst that acts repeatedly and over many reaction cycles.</text>
</comment>
<comment type="similarity">
    <text evidence="7">Belongs to the MGMT family.</text>
</comment>
<proteinExistence type="evidence at protein level"/>
<evidence type="ECO:0000255" key="1">
    <source>
        <dbReference type="PROSITE-ProRule" id="PRU10017"/>
    </source>
</evidence>
<evidence type="ECO:0000269" key="2">
    <source>
    </source>
</evidence>
<evidence type="ECO:0000269" key="3">
    <source>
    </source>
</evidence>
<evidence type="ECO:0000269" key="4">
    <source>
    </source>
</evidence>
<evidence type="ECO:0000269" key="5">
    <source>
    </source>
</evidence>
<evidence type="ECO:0000269" key="6">
    <source>
    </source>
</evidence>
<evidence type="ECO:0000305" key="7"/>
<evidence type="ECO:0007744" key="8">
    <source>
    </source>
</evidence>
<evidence type="ECO:0007744" key="9">
    <source>
    </source>
</evidence>
<evidence type="ECO:0007829" key="10">
    <source>
        <dbReference type="PDB" id="1EH6"/>
    </source>
</evidence>
<evidence type="ECO:0007829" key="11">
    <source>
        <dbReference type="PDB" id="1QNT"/>
    </source>
</evidence>
<evidence type="ECO:0007829" key="12">
    <source>
        <dbReference type="PDB" id="1T38"/>
    </source>
</evidence>
<accession>P16455</accession>
<accession>Q5VY78</accession>
<sequence length="207" mass="21646">MDKDCEMKRTTLDSPLGKLELSGCEQGLHEIKLLGKGTSAADAVEVPAPAAVLGGPEPLMQCTAWLNAYFHQPEAIEEFPVPALHHPVFQQESFTRQVLWKLLKVVKFGEVISYQQLAALAGNPKAARAVGGAMRGNPVPILIPCHRVVCSSGAVGNYSGGLAVKEWLLAHEGHRLGKPGLGGSSGLAGAWLKGAGATSGSPPAGRN</sequence>
<reference key="1">
    <citation type="journal article" date="1990" name="Proc. Natl. Acad. Sci. U.S.A.">
        <title>Isolation and structural characterization of a cDNA clone encoding the human DNA repair protein for O6-alkylguanine.</title>
        <authorList>
            <person name="Tano K."/>
            <person name="Shiota S."/>
            <person name="Collier J."/>
            <person name="Foote R.S."/>
            <person name="Mitra S."/>
        </authorList>
    </citation>
    <scope>NUCLEOTIDE SEQUENCE [MRNA]</scope>
    <scope>PROTEIN SEQUENCE OF 1-8</scope>
</reference>
<reference key="2">
    <citation type="journal article" date="1990" name="J. Biol. Chem.">
        <title>cDNA cloning and chromosomal assignment of the human O6-methylguanine-DNA methyltransferase. cDNA expression in Escherichia coli and gene expression in human cells.</title>
        <authorList>
            <person name="Rydberg B."/>
            <person name="Spurr N."/>
            <person name="Karran P."/>
        </authorList>
    </citation>
    <scope>NUCLEOTIDE SEQUENCE [MRNA]</scope>
</reference>
<reference key="3">
    <citation type="journal article" date="1990" name="J. Biol. Chem.">
        <title>Purification, structure, and biochemical properties of human O6-methylguanine-DNA methyltransferase.</title>
        <authorList>
            <person name="Koike G."/>
            <person name="Maki H."/>
            <person name="Takeya H."/>
            <person name="Hayakawa H."/>
            <person name="Sekiguchi M."/>
        </authorList>
    </citation>
    <scope>NUCLEOTIDE SEQUENCE [MRNA]</scope>
</reference>
<reference key="4">
    <citation type="journal article" date="1990" name="J. Mol. Biol.">
        <title>Expression and cloning of complementary DNA for a human enzyme that repairs O6-methylguanine in DNA.</title>
        <authorList>
            <person name="Hayakawa H."/>
            <person name="Koike G."/>
            <person name="Sekiguchi M."/>
        </authorList>
    </citation>
    <scope>NUCLEOTIDE SEQUENCE [MRNA]</scope>
</reference>
<reference key="5">
    <citation type="submission" date="2003-05" db="EMBL/GenBank/DDBJ databases">
        <title>Cloning of human full-length CDSs in BD Creator(TM) system donor vector.</title>
        <authorList>
            <person name="Kalnine N."/>
            <person name="Chen X."/>
            <person name="Rolfs A."/>
            <person name="Halleck A."/>
            <person name="Hines L."/>
            <person name="Eisenstein S."/>
            <person name="Koundinya M."/>
            <person name="Raphael J."/>
            <person name="Moreira D."/>
            <person name="Kelley T."/>
            <person name="LaBaer J."/>
            <person name="Lin Y."/>
            <person name="Phelan M."/>
            <person name="Farmer A."/>
        </authorList>
    </citation>
    <scope>NUCLEOTIDE SEQUENCE [LARGE SCALE MRNA]</scope>
</reference>
<reference key="6">
    <citation type="journal article" date="2004" name="Nature">
        <title>The DNA sequence and comparative analysis of human chromosome 10.</title>
        <authorList>
            <person name="Deloukas P."/>
            <person name="Earthrowl M.E."/>
            <person name="Grafham D.V."/>
            <person name="Rubenfield M."/>
            <person name="French L."/>
            <person name="Steward C.A."/>
            <person name="Sims S.K."/>
            <person name="Jones M.C."/>
            <person name="Searle S."/>
            <person name="Scott C."/>
            <person name="Howe K."/>
            <person name="Hunt S.E."/>
            <person name="Andrews T.D."/>
            <person name="Gilbert J.G.R."/>
            <person name="Swarbreck D."/>
            <person name="Ashurst J.L."/>
            <person name="Taylor A."/>
            <person name="Battles J."/>
            <person name="Bird C.P."/>
            <person name="Ainscough R."/>
            <person name="Almeida J.P."/>
            <person name="Ashwell R.I.S."/>
            <person name="Ambrose K.D."/>
            <person name="Babbage A.K."/>
            <person name="Bagguley C.L."/>
            <person name="Bailey J."/>
            <person name="Banerjee R."/>
            <person name="Bates K."/>
            <person name="Beasley H."/>
            <person name="Bray-Allen S."/>
            <person name="Brown A.J."/>
            <person name="Brown J.Y."/>
            <person name="Burford D.C."/>
            <person name="Burrill W."/>
            <person name="Burton J."/>
            <person name="Cahill P."/>
            <person name="Camire D."/>
            <person name="Carter N.P."/>
            <person name="Chapman J.C."/>
            <person name="Clark S.Y."/>
            <person name="Clarke G."/>
            <person name="Clee C.M."/>
            <person name="Clegg S."/>
            <person name="Corby N."/>
            <person name="Coulson A."/>
            <person name="Dhami P."/>
            <person name="Dutta I."/>
            <person name="Dunn M."/>
            <person name="Faulkner L."/>
            <person name="Frankish A."/>
            <person name="Frankland J.A."/>
            <person name="Garner P."/>
            <person name="Garnett J."/>
            <person name="Gribble S."/>
            <person name="Griffiths C."/>
            <person name="Grocock R."/>
            <person name="Gustafson E."/>
            <person name="Hammond S."/>
            <person name="Harley J.L."/>
            <person name="Hart E."/>
            <person name="Heath P.D."/>
            <person name="Ho T.P."/>
            <person name="Hopkins B."/>
            <person name="Horne J."/>
            <person name="Howden P.J."/>
            <person name="Huckle E."/>
            <person name="Hynds C."/>
            <person name="Johnson C."/>
            <person name="Johnson D."/>
            <person name="Kana A."/>
            <person name="Kay M."/>
            <person name="Kimberley A.M."/>
            <person name="Kershaw J.K."/>
            <person name="Kokkinaki M."/>
            <person name="Laird G.K."/>
            <person name="Lawlor S."/>
            <person name="Lee H.M."/>
            <person name="Leongamornlert D.A."/>
            <person name="Laird G."/>
            <person name="Lloyd C."/>
            <person name="Lloyd D.M."/>
            <person name="Loveland J."/>
            <person name="Lovell J."/>
            <person name="McLaren S."/>
            <person name="McLay K.E."/>
            <person name="McMurray A."/>
            <person name="Mashreghi-Mohammadi M."/>
            <person name="Matthews L."/>
            <person name="Milne S."/>
            <person name="Nickerson T."/>
            <person name="Nguyen M."/>
            <person name="Overton-Larty E."/>
            <person name="Palmer S.A."/>
            <person name="Pearce A.V."/>
            <person name="Peck A.I."/>
            <person name="Pelan S."/>
            <person name="Phillimore B."/>
            <person name="Porter K."/>
            <person name="Rice C.M."/>
            <person name="Rogosin A."/>
            <person name="Ross M.T."/>
            <person name="Sarafidou T."/>
            <person name="Sehra H.K."/>
            <person name="Shownkeen R."/>
            <person name="Skuce C.D."/>
            <person name="Smith M."/>
            <person name="Standring L."/>
            <person name="Sycamore N."/>
            <person name="Tester J."/>
            <person name="Thorpe A."/>
            <person name="Torcasso W."/>
            <person name="Tracey A."/>
            <person name="Tromans A."/>
            <person name="Tsolas J."/>
            <person name="Wall M."/>
            <person name="Walsh J."/>
            <person name="Wang H."/>
            <person name="Weinstock K."/>
            <person name="West A.P."/>
            <person name="Willey D.L."/>
            <person name="Whitehead S.L."/>
            <person name="Wilming L."/>
            <person name="Wray P.W."/>
            <person name="Young L."/>
            <person name="Chen Y."/>
            <person name="Lovering R.C."/>
            <person name="Moschonas N.K."/>
            <person name="Siebert R."/>
            <person name="Fechtel K."/>
            <person name="Bentley D."/>
            <person name="Durbin R.M."/>
            <person name="Hubbard T."/>
            <person name="Doucette-Stamm L."/>
            <person name="Beck S."/>
            <person name="Smith D.R."/>
            <person name="Rogers J."/>
        </authorList>
    </citation>
    <scope>NUCLEOTIDE SEQUENCE [LARGE SCALE GENOMIC DNA]</scope>
</reference>
<reference key="7">
    <citation type="submission" date="2005-09" db="EMBL/GenBank/DDBJ databases">
        <authorList>
            <person name="Mural R.J."/>
            <person name="Istrail S."/>
            <person name="Sutton G.G."/>
            <person name="Florea L."/>
            <person name="Halpern A.L."/>
            <person name="Mobarry C.M."/>
            <person name="Lippert R."/>
            <person name="Walenz B."/>
            <person name="Shatkay H."/>
            <person name="Dew I."/>
            <person name="Miller J.R."/>
            <person name="Flanigan M.J."/>
            <person name="Edwards N.J."/>
            <person name="Bolanos R."/>
            <person name="Fasulo D."/>
            <person name="Halldorsson B.V."/>
            <person name="Hannenhalli S."/>
            <person name="Turner R."/>
            <person name="Yooseph S."/>
            <person name="Lu F."/>
            <person name="Nusskern D.R."/>
            <person name="Shue B.C."/>
            <person name="Zheng X.H."/>
            <person name="Zhong F."/>
            <person name="Delcher A.L."/>
            <person name="Huson D.H."/>
            <person name="Kravitz S.A."/>
            <person name="Mouchard L."/>
            <person name="Reinert K."/>
            <person name="Remington K.A."/>
            <person name="Clark A.G."/>
            <person name="Waterman M.S."/>
            <person name="Eichler E.E."/>
            <person name="Adams M.D."/>
            <person name="Hunkapiller M.W."/>
            <person name="Myers E.W."/>
            <person name="Venter J.C."/>
        </authorList>
    </citation>
    <scope>NUCLEOTIDE SEQUENCE [LARGE SCALE GENOMIC DNA]</scope>
</reference>
<reference key="8">
    <citation type="journal article" date="2004" name="Genome Res.">
        <title>The status, quality, and expansion of the NIH full-length cDNA project: the Mammalian Gene Collection (MGC).</title>
        <authorList>
            <consortium name="The MGC Project Team"/>
        </authorList>
    </citation>
    <scope>NUCLEOTIDE SEQUENCE [LARGE SCALE MRNA]</scope>
    <source>
        <tissue>Placenta</tissue>
    </source>
</reference>
<reference key="9">
    <citation type="journal article" date="1991" name="J. Biol. Chem.">
        <title>Structural and immunological comparison of indigenous human O6-methylguanine-DNA methyltransferase with that encoded by a cloned cDNA.</title>
        <authorList>
            <person name="von Wronski M.A."/>
            <person name="Shiota S."/>
            <person name="Tano K."/>
            <person name="Mitra S."/>
            <person name="Bigner D.D."/>
            <person name="Brent T.P."/>
        </authorList>
    </citation>
    <scope>PARTIAL PROTEIN SEQUENCE</scope>
    <scope>ALKYL GROUP ACCEPTOR</scope>
</reference>
<reference key="10">
    <citation type="journal article" date="1994" name="Nucleic Acids Res.">
        <title>Specificities of human, rat and E. coli O6-methylguanine-DNA methyltransferases towards the repair of O6-methyl and O6-ethylguanine in DNA.</title>
        <authorList>
            <person name="Liem L.-K."/>
            <person name="Lim A."/>
            <person name="Li B.F.L."/>
        </authorList>
    </citation>
    <scope>CHARACTERIZATION</scope>
</reference>
<reference key="11">
    <citation type="journal article" date="1994" name="Cancer Res.">
        <title>Mutations in human O6-alkylguanine-DNA alkyltransferase imparting resistance to O6-benzylguanine.</title>
        <authorList>
            <person name="Crone T.M."/>
            <person name="Goodtzova K."/>
            <person name="Edara S."/>
            <person name="Pegg A.E."/>
        </authorList>
    </citation>
    <scope>MUTAGENESIS OF PRO-138; PRO-140 AND GLY-156</scope>
</reference>
<reference key="12">
    <citation type="journal article" date="1995" name="Biochemistry">
        <title>Alteration of arginine-128 to alanine abolishes the ability of human O6-alkylguanine-DNA alkyltransferase to repair methylated DNA but has no effect on its reaction with O6-benzylguanine.</title>
        <authorList>
            <person name="Kanugula S."/>
            <person name="Goodtzova K."/>
            <person name="Edara S."/>
            <person name="Pegg A.E."/>
        </authorList>
    </citation>
    <scope>MUTAGENESIS OF TYR-114; ARG-128 AND CYS-145</scope>
</reference>
<reference key="13">
    <citation type="journal article" date="1995" name="Carcinogenesis">
        <title>The role of tyrosine-158 in O6-alkylguanine-DNA alkyltransferase activity.</title>
        <authorList>
            <person name="Edara S."/>
            <person name="Goodtzova K."/>
            <person name="Pegg A.E."/>
        </authorList>
    </citation>
    <scope>MUTAGENESIS OF TYR-158</scope>
</reference>
<reference key="14">
    <citation type="journal article" date="2013" name="J. Proteome Res.">
        <title>Toward a comprehensive characterization of a human cancer cell phosphoproteome.</title>
        <authorList>
            <person name="Zhou H."/>
            <person name="Di Palma S."/>
            <person name="Preisinger C."/>
            <person name="Peng M."/>
            <person name="Polat A.N."/>
            <person name="Heck A.J."/>
            <person name="Mohammed S."/>
        </authorList>
    </citation>
    <scope>PHOSPHORYLATION [LARGE SCALE ANALYSIS] AT SER-14 AND SER-201</scope>
    <scope>IDENTIFICATION BY MASS SPECTROMETRY [LARGE SCALE ANALYSIS]</scope>
    <source>
        <tissue>Cervix carcinoma</tissue>
    </source>
</reference>
<reference key="15">
    <citation type="journal article" date="2014" name="J. Proteomics">
        <title>An enzyme assisted RP-RPLC approach for in-depth analysis of human liver phosphoproteome.</title>
        <authorList>
            <person name="Bian Y."/>
            <person name="Song C."/>
            <person name="Cheng K."/>
            <person name="Dong M."/>
            <person name="Wang F."/>
            <person name="Huang J."/>
            <person name="Sun D."/>
            <person name="Wang L."/>
            <person name="Ye M."/>
            <person name="Zou H."/>
        </authorList>
    </citation>
    <scope>PHOSPHORYLATION [LARGE SCALE ANALYSIS] AT SER-201</scope>
    <scope>IDENTIFICATION BY MASS SPECTROMETRY [LARGE SCALE ANALYSIS]</scope>
    <source>
        <tissue>Liver</tissue>
    </source>
</reference>
<reference key="16">
    <citation type="journal article" date="2000" name="EMBO J.">
        <title>Active and alkylated human AGT structures: a novel zinc site, inhibitor and extrahelical base binding.</title>
        <authorList>
            <person name="Daniels D.S."/>
            <person name="Mol C.D."/>
            <person name="Arvai A.S."/>
            <person name="Kanugula S."/>
            <person name="Pegg A.E."/>
            <person name="Tainer J.A."/>
        </authorList>
    </citation>
    <scope>X-RAY CRYSTALLOGRAPHY (2.0 ANGSTROMS) IN COMPLEX WITH DNA AND ZINC IONS</scope>
    <scope>MUTAGENESIS OF ARG-128 AND CYS-145</scope>
</reference>
<reference key="17">
    <citation type="journal article" date="2000" name="Nucleic Acids Res.">
        <title>Crystal structure of the human O(6)-alkylguanine-DNA alkyltransferase.</title>
        <authorList>
            <person name="Wibley J.E."/>
            <person name="Pegg A.E."/>
            <person name="Moody P.C."/>
        </authorList>
    </citation>
    <scope>X-RAY CRYSTALLOGRAPHY (1.9 ANGSTROMS) OF 1-176</scope>
</reference>
<reference key="18">
    <citation type="journal article" date="2005" name="J. Mol. Biol.">
        <title>The structure of the human AGT protein bound to DNA and its implications for damage detection.</title>
        <authorList>
            <person name="Duguid E.M."/>
            <person name="Rice P.A."/>
            <person name="He C."/>
        </authorList>
    </citation>
    <scope>X-RAY CRYSTALLOGRAPHY (3.0 ANGSTROMS) OF 1-179 IN COMPLEX WITH DNA AND ZINC IONS</scope>
</reference>
<dbReference type="EC" id="2.1.1.63"/>
<dbReference type="EMBL" id="X54228">
    <property type="protein sequence ID" value="CAA38137.1"/>
    <property type="molecule type" value="mRNA"/>
</dbReference>
<dbReference type="EMBL" id="M29971">
    <property type="protein sequence ID" value="AAA59596.1"/>
    <property type="molecule type" value="mRNA"/>
</dbReference>
<dbReference type="EMBL" id="M31767">
    <property type="protein sequence ID" value="AAA52317.1"/>
    <property type="molecule type" value="mRNA"/>
</dbReference>
<dbReference type="EMBL" id="M60761">
    <property type="protein sequence ID" value="AAA59594.1"/>
    <property type="molecule type" value="mRNA"/>
</dbReference>
<dbReference type="EMBL" id="BT006714">
    <property type="protein sequence ID" value="AAP35360.1"/>
    <property type="molecule type" value="mRNA"/>
</dbReference>
<dbReference type="EMBL" id="AL157832">
    <property type="status" value="NOT_ANNOTATED_CDS"/>
    <property type="molecule type" value="Genomic_DNA"/>
</dbReference>
<dbReference type="EMBL" id="AL355531">
    <property type="status" value="NOT_ANNOTATED_CDS"/>
    <property type="molecule type" value="Genomic_DNA"/>
</dbReference>
<dbReference type="EMBL" id="CH471066">
    <property type="protein sequence ID" value="EAW49166.1"/>
    <property type="molecule type" value="Genomic_DNA"/>
</dbReference>
<dbReference type="EMBL" id="BC000824">
    <property type="protein sequence ID" value="AAH00824.1"/>
    <property type="molecule type" value="mRNA"/>
</dbReference>
<dbReference type="CCDS" id="CCDS7660.3"/>
<dbReference type="PIR" id="A34889">
    <property type="entry name" value="XUHUMC"/>
</dbReference>
<dbReference type="RefSeq" id="NP_002403.3">
    <property type="nucleotide sequence ID" value="NM_002412.5"/>
</dbReference>
<dbReference type="RefSeq" id="XP_005252739.1">
    <property type="nucleotide sequence ID" value="XM_005252682.2"/>
</dbReference>
<dbReference type="PDB" id="1EH6">
    <property type="method" value="X-ray"/>
    <property type="resolution" value="2.00 A"/>
    <property type="chains" value="A=1-207"/>
</dbReference>
<dbReference type="PDB" id="1EH7">
    <property type="method" value="X-ray"/>
    <property type="resolution" value="2.00 A"/>
    <property type="chains" value="A=1-207"/>
</dbReference>
<dbReference type="PDB" id="1EH8">
    <property type="method" value="X-ray"/>
    <property type="resolution" value="2.50 A"/>
    <property type="chains" value="A=1-207"/>
</dbReference>
<dbReference type="PDB" id="1QNT">
    <property type="method" value="X-ray"/>
    <property type="resolution" value="1.90 A"/>
    <property type="chains" value="A=1-176"/>
</dbReference>
<dbReference type="PDB" id="1T38">
    <property type="method" value="X-ray"/>
    <property type="resolution" value="3.20 A"/>
    <property type="chains" value="A=1-176"/>
</dbReference>
<dbReference type="PDB" id="1T39">
    <property type="method" value="X-ray"/>
    <property type="resolution" value="3.30 A"/>
    <property type="chains" value="A/B=1-176"/>
</dbReference>
<dbReference type="PDB" id="1YFH">
    <property type="method" value="X-ray"/>
    <property type="resolution" value="3.01 A"/>
    <property type="chains" value="A/B/C=1-179"/>
</dbReference>
<dbReference type="PDB" id="8RGG">
    <property type="method" value="EM"/>
    <property type="resolution" value="4.00 A"/>
    <property type="chains" value="B=2-184"/>
</dbReference>
<dbReference type="PDB" id="8RGH">
    <property type="method" value="EM"/>
    <property type="resolution" value="3.90 A"/>
    <property type="chains" value="A=2-184"/>
</dbReference>
<dbReference type="PDB" id="8RTY">
    <property type="method" value="EM"/>
    <property type="resolution" value="6.25 A"/>
    <property type="chains" value="E/F=2-182"/>
</dbReference>
<dbReference type="PDB" id="8RU2">
    <property type="method" value="EM"/>
    <property type="resolution" value="3.49 A"/>
    <property type="chains" value="E/F=1-182"/>
</dbReference>
<dbReference type="PDBsum" id="1EH6"/>
<dbReference type="PDBsum" id="1EH7"/>
<dbReference type="PDBsum" id="1EH8"/>
<dbReference type="PDBsum" id="1QNT"/>
<dbReference type="PDBsum" id="1T38"/>
<dbReference type="PDBsum" id="1T39"/>
<dbReference type="PDBsum" id="1YFH"/>
<dbReference type="PDBsum" id="8RGG"/>
<dbReference type="PDBsum" id="8RGH"/>
<dbReference type="PDBsum" id="8RTY"/>
<dbReference type="PDBsum" id="8RU2"/>
<dbReference type="SMR" id="P16455"/>
<dbReference type="BioGRID" id="110411">
    <property type="interactions" value="89"/>
</dbReference>
<dbReference type="FunCoup" id="P16455">
    <property type="interactions" value="256"/>
</dbReference>
<dbReference type="IntAct" id="P16455">
    <property type="interactions" value="2"/>
</dbReference>
<dbReference type="MINT" id="P16455"/>
<dbReference type="STRING" id="9606.ENSP00000302111"/>
<dbReference type="BindingDB" id="P16455"/>
<dbReference type="ChEMBL" id="CHEMBL2864"/>
<dbReference type="DrugBank" id="DB11919">
    <property type="generic name" value="6-O-benzylguanine"/>
</dbReference>
<dbReference type="DrugBank" id="DB00151">
    <property type="generic name" value="Cysteine"/>
</dbReference>
<dbReference type="DrugBank" id="DB11831">
    <property type="generic name" value="Dinitrochlorobenzene"/>
</dbReference>
<dbReference type="DrugBank" id="DB04531">
    <property type="generic name" value="S-Benzylcysteine"/>
</dbReference>
<dbReference type="DrugBank" id="DB02216">
    <property type="generic name" value="S-Methylcysteine"/>
</dbReference>
<dbReference type="DrugBank" id="DB01593">
    <property type="generic name" value="Zinc"/>
</dbReference>
<dbReference type="DrugBank" id="DB14487">
    <property type="generic name" value="Zinc acetate"/>
</dbReference>
<dbReference type="DrugBank" id="DB14533">
    <property type="generic name" value="Zinc chloride"/>
</dbReference>
<dbReference type="DrugBank" id="DB14548">
    <property type="generic name" value="Zinc sulfate, unspecified form"/>
</dbReference>
<dbReference type="GlyConnect" id="1505">
    <property type="glycosylation" value="3 N-Linked glycans (1 site)"/>
</dbReference>
<dbReference type="GlyCosmos" id="P16455">
    <property type="glycosylation" value="2 sites, 4 glycans"/>
</dbReference>
<dbReference type="GlyGen" id="P16455">
    <property type="glycosylation" value="2 sites, 3 N-linked glycans (1 site), 1 O-linked glycan (1 site)"/>
</dbReference>
<dbReference type="iPTMnet" id="P16455"/>
<dbReference type="PhosphoSitePlus" id="P16455"/>
<dbReference type="BioMuta" id="MGMT"/>
<dbReference type="DMDM" id="127069"/>
<dbReference type="jPOST" id="P16455"/>
<dbReference type="MassIVE" id="P16455"/>
<dbReference type="PaxDb" id="9606-ENSP00000302111"/>
<dbReference type="PeptideAtlas" id="P16455"/>
<dbReference type="ProteomicsDB" id="53365"/>
<dbReference type="Pumba" id="P16455"/>
<dbReference type="ABCD" id="P16455">
    <property type="antibodies" value="1 sequenced antibody"/>
</dbReference>
<dbReference type="Antibodypedia" id="32507">
    <property type="antibodies" value="940 antibodies from 42 providers"/>
</dbReference>
<dbReference type="CPTC" id="P16455">
    <property type="antibodies" value="1 antibody"/>
</dbReference>
<dbReference type="DNASU" id="4255"/>
<dbReference type="Ensembl" id="ENST00000651593.1">
    <property type="protein sequence ID" value="ENSP00000498729.1"/>
    <property type="gene ID" value="ENSG00000170430.10"/>
</dbReference>
<dbReference type="GeneID" id="4255"/>
<dbReference type="KEGG" id="hsa:4255"/>
<dbReference type="MANE-Select" id="ENST00000651593.1">
    <property type="protein sequence ID" value="ENSP00000498729.1"/>
    <property type="RefSeq nucleotide sequence ID" value="NM_002412.5"/>
    <property type="RefSeq protein sequence ID" value="NP_002403.3"/>
</dbReference>
<dbReference type="UCSC" id="uc001lkh.3">
    <property type="organism name" value="human"/>
</dbReference>
<dbReference type="AGR" id="HGNC:7059"/>
<dbReference type="CTD" id="4255"/>
<dbReference type="DisGeNET" id="4255"/>
<dbReference type="GeneCards" id="MGMT"/>
<dbReference type="HGNC" id="HGNC:7059">
    <property type="gene designation" value="MGMT"/>
</dbReference>
<dbReference type="HPA" id="ENSG00000170430">
    <property type="expression patterns" value="Tissue enhanced (liver)"/>
</dbReference>
<dbReference type="MalaCards" id="MGMT"/>
<dbReference type="MIM" id="156569">
    <property type="type" value="gene"/>
</dbReference>
<dbReference type="neXtProt" id="NX_P16455"/>
<dbReference type="OpenTargets" id="ENSG00000170430"/>
<dbReference type="Orphanet" id="618">
    <property type="disease" value="Familial melanoma"/>
</dbReference>
<dbReference type="Orphanet" id="251579">
    <property type="disease" value="Giant cell glioblastoma"/>
</dbReference>
<dbReference type="Orphanet" id="251576">
    <property type="disease" value="Gliosarcoma"/>
</dbReference>
<dbReference type="VEuPathDB" id="HostDB:ENSG00000170430"/>
<dbReference type="eggNOG" id="KOG4062">
    <property type="taxonomic scope" value="Eukaryota"/>
</dbReference>
<dbReference type="GeneTree" id="ENSGT00390000015799"/>
<dbReference type="HOGENOM" id="CLU_000445_52_2_1"/>
<dbReference type="InParanoid" id="P16455"/>
<dbReference type="OrthoDB" id="1907495at2759"/>
<dbReference type="PAN-GO" id="P16455">
    <property type="GO annotations" value="3 GO annotations based on evolutionary models"/>
</dbReference>
<dbReference type="PhylomeDB" id="P16455"/>
<dbReference type="TreeFam" id="TF314064"/>
<dbReference type="BRENDA" id="2.1.1.63">
    <property type="organism ID" value="2681"/>
</dbReference>
<dbReference type="PathwayCommons" id="P16455"/>
<dbReference type="Reactome" id="R-HSA-5657655">
    <property type="pathway name" value="MGMT-mediated DNA damage reversal"/>
</dbReference>
<dbReference type="SignaLink" id="P16455"/>
<dbReference type="SIGNOR" id="P16455"/>
<dbReference type="BioGRID-ORCS" id="4255">
    <property type="hits" value="8 hits in 1162 CRISPR screens"/>
</dbReference>
<dbReference type="ChiTaRS" id="MGMT">
    <property type="organism name" value="human"/>
</dbReference>
<dbReference type="EvolutionaryTrace" id="P16455"/>
<dbReference type="GeneWiki" id="O-6-methylguanine-DNA_methyltransferase"/>
<dbReference type="GenomeRNAi" id="4255"/>
<dbReference type="Pharos" id="P16455">
    <property type="development level" value="Tchem"/>
</dbReference>
<dbReference type="PRO" id="PR:P16455"/>
<dbReference type="Proteomes" id="UP000005640">
    <property type="component" value="Chromosome 10"/>
</dbReference>
<dbReference type="RNAct" id="P16455">
    <property type="molecule type" value="protein"/>
</dbReference>
<dbReference type="Bgee" id="ENSG00000170430">
    <property type="expression patterns" value="Expressed in right lobe of liver and 178 other cell types or tissues"/>
</dbReference>
<dbReference type="ExpressionAtlas" id="P16455">
    <property type="expression patterns" value="baseline and differential"/>
</dbReference>
<dbReference type="GO" id="GO:0016020">
    <property type="term" value="C:membrane"/>
    <property type="evidence" value="ECO:0007005"/>
    <property type="project" value="UniProtKB"/>
</dbReference>
<dbReference type="GO" id="GO:0005654">
    <property type="term" value="C:nucleoplasm"/>
    <property type="evidence" value="ECO:0000314"/>
    <property type="project" value="HPA"/>
</dbReference>
<dbReference type="GO" id="GO:0005634">
    <property type="term" value="C:nucleus"/>
    <property type="evidence" value="ECO:0000304"/>
    <property type="project" value="ProtInc"/>
</dbReference>
<dbReference type="GO" id="GO:0003677">
    <property type="term" value="F:DNA binding"/>
    <property type="evidence" value="ECO:0000304"/>
    <property type="project" value="ProtInc"/>
</dbReference>
<dbReference type="GO" id="GO:0009008">
    <property type="term" value="F:DNA-methyltransferase activity"/>
    <property type="evidence" value="ECO:0000304"/>
    <property type="project" value="ProtInc"/>
</dbReference>
<dbReference type="GO" id="GO:0046872">
    <property type="term" value="F:metal ion binding"/>
    <property type="evidence" value="ECO:0007669"/>
    <property type="project" value="UniProtKB-KW"/>
</dbReference>
<dbReference type="GO" id="GO:0003908">
    <property type="term" value="F:methylated-DNA-[protein]-cysteine S-methyltransferase activity"/>
    <property type="evidence" value="ECO:0000318"/>
    <property type="project" value="GO_Central"/>
</dbReference>
<dbReference type="GO" id="GO:0008168">
    <property type="term" value="F:methyltransferase activity"/>
    <property type="evidence" value="ECO:0000304"/>
    <property type="project" value="ProtInc"/>
</dbReference>
<dbReference type="GO" id="GO:0006307">
    <property type="term" value="P:DNA alkylation repair"/>
    <property type="evidence" value="ECO:0007669"/>
    <property type="project" value="Ensembl"/>
</dbReference>
<dbReference type="GO" id="GO:0006281">
    <property type="term" value="P:DNA repair"/>
    <property type="evidence" value="ECO:0000318"/>
    <property type="project" value="GO_Central"/>
</dbReference>
<dbReference type="GO" id="GO:0032259">
    <property type="term" value="P:methylation"/>
    <property type="evidence" value="ECO:0007669"/>
    <property type="project" value="UniProtKB-KW"/>
</dbReference>
<dbReference type="GO" id="GO:0043066">
    <property type="term" value="P:negative regulation of apoptotic process"/>
    <property type="evidence" value="ECO:0000314"/>
    <property type="project" value="BHF-UCL"/>
</dbReference>
<dbReference type="GO" id="GO:2000781">
    <property type="term" value="P:positive regulation of double-strand break repair"/>
    <property type="evidence" value="ECO:0000314"/>
    <property type="project" value="BHF-UCL"/>
</dbReference>
<dbReference type="CDD" id="cd06445">
    <property type="entry name" value="ATase"/>
    <property type="match status" value="1"/>
</dbReference>
<dbReference type="FunFam" id="1.10.10.10:FF:000214">
    <property type="entry name" value="Methylated-DNA--protein-cysteine methyltransferase"/>
    <property type="match status" value="1"/>
</dbReference>
<dbReference type="FunFam" id="3.30.160.70:FF:000001">
    <property type="entry name" value="Methylated-DNA--protein-cysteine methyltransferase"/>
    <property type="match status" value="1"/>
</dbReference>
<dbReference type="Gene3D" id="3.30.160.70">
    <property type="entry name" value="Methylated DNA-protein cysteine methyltransferase domain"/>
    <property type="match status" value="1"/>
</dbReference>
<dbReference type="Gene3D" id="1.10.10.10">
    <property type="entry name" value="Winged helix-like DNA-binding domain superfamily/Winged helix DNA-binding domain"/>
    <property type="match status" value="1"/>
</dbReference>
<dbReference type="InterPro" id="IPR001497">
    <property type="entry name" value="MethylDNA_cys_MeTrfase_AS"/>
</dbReference>
<dbReference type="InterPro" id="IPR014048">
    <property type="entry name" value="MethylDNA_cys_MeTrfase_DNA-bd"/>
</dbReference>
<dbReference type="InterPro" id="IPR036217">
    <property type="entry name" value="MethylDNA_cys_MeTrfase_DNAb"/>
</dbReference>
<dbReference type="InterPro" id="IPR008332">
    <property type="entry name" value="MethylG_MeTrfase_N"/>
</dbReference>
<dbReference type="InterPro" id="IPR036631">
    <property type="entry name" value="MGMT_N_sf"/>
</dbReference>
<dbReference type="InterPro" id="IPR036388">
    <property type="entry name" value="WH-like_DNA-bd_sf"/>
</dbReference>
<dbReference type="NCBIfam" id="TIGR00589">
    <property type="entry name" value="ogt"/>
    <property type="match status" value="1"/>
</dbReference>
<dbReference type="PANTHER" id="PTHR46460">
    <property type="entry name" value="METHYLATED-DNA--PROTEIN-CYSTEINE METHYLTRANSFERASE"/>
    <property type="match status" value="1"/>
</dbReference>
<dbReference type="PANTHER" id="PTHR46460:SF1">
    <property type="entry name" value="METHYLATED-DNA--PROTEIN-CYSTEINE METHYLTRANSFERASE"/>
    <property type="match status" value="1"/>
</dbReference>
<dbReference type="Pfam" id="PF01035">
    <property type="entry name" value="DNA_binding_1"/>
    <property type="match status" value="1"/>
</dbReference>
<dbReference type="Pfam" id="PF02870">
    <property type="entry name" value="Methyltransf_1N"/>
    <property type="match status" value="1"/>
</dbReference>
<dbReference type="SUPFAM" id="SSF53155">
    <property type="entry name" value="Methylated DNA-protein cysteine methyltransferase domain"/>
    <property type="match status" value="1"/>
</dbReference>
<dbReference type="SUPFAM" id="SSF46767">
    <property type="entry name" value="Methylated DNA-protein cysteine methyltransferase, C-terminal domain"/>
    <property type="match status" value="1"/>
</dbReference>
<dbReference type="PROSITE" id="PS00374">
    <property type="entry name" value="MGMT"/>
    <property type="match status" value="1"/>
</dbReference>
<organism>
    <name type="scientific">Homo sapiens</name>
    <name type="common">Human</name>
    <dbReference type="NCBI Taxonomy" id="9606"/>
    <lineage>
        <taxon>Eukaryota</taxon>
        <taxon>Metazoa</taxon>
        <taxon>Chordata</taxon>
        <taxon>Craniata</taxon>
        <taxon>Vertebrata</taxon>
        <taxon>Euteleostomi</taxon>
        <taxon>Mammalia</taxon>
        <taxon>Eutheria</taxon>
        <taxon>Euarchontoglires</taxon>
        <taxon>Primates</taxon>
        <taxon>Haplorrhini</taxon>
        <taxon>Catarrhini</taxon>
        <taxon>Hominidae</taxon>
        <taxon>Homo</taxon>
    </lineage>
</organism>
<name>MGMT_HUMAN</name>
<feature type="chain" id="PRO_0000139359" description="Methylated-DNA--protein-cysteine methyltransferase">
    <location>
        <begin position="1"/>
        <end position="207"/>
    </location>
</feature>
<feature type="active site" description="Nucleophile; methyl group acceptor">
    <location>
        <position position="145"/>
    </location>
</feature>
<feature type="binding site">
    <location>
        <position position="5"/>
    </location>
    <ligand>
        <name>Zn(2+)</name>
        <dbReference type="ChEBI" id="CHEBI:29105"/>
    </ligand>
</feature>
<feature type="binding site">
    <location>
        <position position="24"/>
    </location>
    <ligand>
        <name>Zn(2+)</name>
        <dbReference type="ChEBI" id="CHEBI:29105"/>
    </ligand>
</feature>
<feature type="binding site">
    <location>
        <position position="29"/>
    </location>
    <ligand>
        <name>Zn(2+)</name>
        <dbReference type="ChEBI" id="CHEBI:29105"/>
    </ligand>
</feature>
<feature type="binding site">
    <location>
        <position position="85"/>
    </location>
    <ligand>
        <name>Zn(2+)</name>
        <dbReference type="ChEBI" id="CHEBI:29105"/>
    </ligand>
</feature>
<feature type="binding site" evidence="2 3">
    <location>
        <position position="95"/>
    </location>
    <ligand>
        <name>DNA</name>
        <dbReference type="ChEBI" id="CHEBI:16991"/>
    </ligand>
</feature>
<feature type="binding site" evidence="2 3">
    <location>
        <position position="114"/>
    </location>
    <ligand>
        <name>DNA</name>
        <dbReference type="ChEBI" id="CHEBI:16991"/>
    </ligand>
</feature>
<feature type="binding site" evidence="2 3">
    <location>
        <position position="115"/>
    </location>
    <ligand>
        <name>DNA</name>
        <dbReference type="ChEBI" id="CHEBI:16991"/>
    </ligand>
</feature>
<feature type="binding site" evidence="2 3">
    <location>
        <position position="123"/>
    </location>
    <ligand>
        <name>DNA</name>
        <dbReference type="ChEBI" id="CHEBI:16991"/>
    </ligand>
</feature>
<feature type="binding site" evidence="2 3">
    <location>
        <position position="128"/>
    </location>
    <ligand>
        <name>DNA</name>
        <dbReference type="ChEBI" id="CHEBI:16991"/>
    </ligand>
</feature>
<feature type="binding site" evidence="2 3">
    <location>
        <position position="151"/>
    </location>
    <ligand>
        <name>DNA</name>
        <dbReference type="ChEBI" id="CHEBI:16991"/>
    </ligand>
</feature>
<feature type="modified residue" description="Phosphoserine" evidence="8">
    <location>
        <position position="14"/>
    </location>
</feature>
<feature type="modified residue" description="Phosphoserine" evidence="8 9">
    <location>
        <position position="201"/>
    </location>
</feature>
<feature type="sequence variant" id="VAR_014750" description="In dbSNP:rs2020893.">
    <original>E</original>
    <variation>K</variation>
    <location>
        <position position="30"/>
    </location>
</feature>
<feature type="sequence variant" id="VAR_056129" description="In dbSNP:rs12917.">
    <original>L</original>
    <variation>F</variation>
    <location>
        <position position="53"/>
    </location>
</feature>
<feature type="sequence variant" id="VAR_029112" description="In dbSNP:rs2308322.">
    <original>P</original>
    <variation>S</variation>
    <location>
        <position position="58"/>
    </location>
</feature>
<feature type="sequence variant" id="VAR_020354" description="In dbSNP:rs2282164.">
    <original>W</original>
    <variation>C</variation>
    <location>
        <position position="65"/>
    </location>
</feature>
<feature type="sequence variant" id="VAR_014751" description="In dbSNP:rs12917.">
    <original>L</original>
    <variation>F</variation>
    <location>
        <position position="84"/>
    </location>
</feature>
<feature type="sequence variant" id="VAR_056130" description="In dbSNP:rs2308321.">
    <original>I</original>
    <variation>V</variation>
    <location>
        <position position="112"/>
    </location>
</feature>
<feature type="sequence variant" id="VAR_014752" description="In dbSNP:rs2308321.">
    <original>I</original>
    <variation>V</variation>
    <location>
        <position position="143"/>
    </location>
</feature>
<feature type="sequence variant" id="VAR_014753" description="In dbSNP:rs2308318.">
    <original>G</original>
    <variation>R</variation>
    <location>
        <position position="160"/>
    </location>
</feature>
<feature type="sequence variant" id="VAR_014754" description="In dbSNP:rs2308320.">
    <original>E</original>
    <variation>D</variation>
    <location>
        <position position="166"/>
    </location>
</feature>
<feature type="sequence variant" id="VAR_014755" description="In dbSNP:rs2308327.">
    <original>K</original>
    <variation>R</variation>
    <location>
        <position position="178"/>
    </location>
</feature>
<feature type="mutagenesis site" description="Decreases activity towards methylated DNA over 1000-fold. Slightly reduced reactivity with O6-benzylguanine." evidence="5">
    <original>Y</original>
    <variation>A</variation>
    <location>
        <position position="114"/>
    </location>
</feature>
<feature type="mutagenesis site" description="Loss of DNA repair activity. Slightly reduced reactivity with O6-benzylguanine." evidence="5">
    <original>Y</original>
    <variation>E</variation>
    <location>
        <position position="114"/>
    </location>
</feature>
<feature type="mutagenesis site" description="Decreases activity towards methylated DNA over 1000-fold. No effect on reactivity with O6-benzylguanine." evidence="2 5">
    <original>R</original>
    <variation>A</variation>
    <variation>D</variation>
    <location>
        <position position="128"/>
    </location>
</feature>
<feature type="mutagenesis site" description="Loss of DNA repair activity." evidence="2 5">
    <original>R</original>
    <variation>G</variation>
    <location>
        <position position="128"/>
    </location>
</feature>
<feature type="mutagenesis site" description="Slightly reduced DNA repair activity." evidence="2 5">
    <original>R</original>
    <variation>K</variation>
    <variation>L</variation>
    <location>
        <position position="128"/>
    </location>
</feature>
<feature type="mutagenesis site" description="Decreased reactivity with O6-benzylguanine." evidence="6">
    <original>P</original>
    <variation>K</variation>
    <location>
        <position position="138"/>
    </location>
</feature>
<feature type="mutagenesis site" description="Decreased reactivity with O6-benzylguanine." evidence="6">
    <original>P</original>
    <variation>A</variation>
    <location>
        <position position="140"/>
    </location>
</feature>
<feature type="mutagenesis site" description="Loss of DNA repair activity." evidence="2 5">
    <original>C</original>
    <variation>A</variation>
    <location>
        <position position="145"/>
    </location>
</feature>
<feature type="mutagenesis site" description="Decreased reactivity with O6-benzylguanine." evidence="6">
    <original>G</original>
    <variation>A</variation>
    <location>
        <position position="156"/>
    </location>
</feature>
<feature type="mutagenesis site" description="Reduced DNA repair activity. Decreased reactivity with O6-benzylguanine." evidence="4">
    <original>Y</original>
    <variation>A</variation>
    <location>
        <position position="158"/>
    </location>
</feature>
<feature type="mutagenesis site" description="Slightly reduced DNA repair activity." evidence="4">
    <original>Y</original>
    <variation>F</variation>
    <location>
        <position position="158"/>
    </location>
</feature>
<feature type="sequence conflict" description="In Ref. 2; AAA52317." evidence="7" ref="2">
    <original>A</original>
    <variation>T</variation>
    <location>
        <position position="127"/>
    </location>
</feature>
<feature type="strand" evidence="11">
    <location>
        <begin position="8"/>
        <end position="12"/>
    </location>
</feature>
<feature type="strand" evidence="11">
    <location>
        <begin position="19"/>
        <end position="24"/>
    </location>
</feature>
<feature type="strand" evidence="11">
    <location>
        <begin position="27"/>
        <end position="33"/>
    </location>
</feature>
<feature type="strand" evidence="10">
    <location>
        <begin position="50"/>
        <end position="52"/>
    </location>
</feature>
<feature type="helix" evidence="11">
    <location>
        <begin position="57"/>
        <end position="71"/>
    </location>
</feature>
<feature type="helix" evidence="11">
    <location>
        <begin position="73"/>
        <end position="78"/>
    </location>
</feature>
<feature type="helix" evidence="11">
    <location>
        <begin position="87"/>
        <end position="90"/>
    </location>
</feature>
<feature type="helix" evidence="11">
    <location>
        <begin position="94"/>
        <end position="105"/>
    </location>
</feature>
<feature type="helix" evidence="11">
    <location>
        <begin position="114"/>
        <end position="120"/>
    </location>
</feature>
<feature type="turn" evidence="12">
    <location>
        <begin position="124"/>
        <end position="126"/>
    </location>
</feature>
<feature type="helix" evidence="11">
    <location>
        <begin position="127"/>
        <end position="134"/>
    </location>
</feature>
<feature type="strand" evidence="11">
    <location>
        <begin position="138"/>
        <end position="140"/>
    </location>
</feature>
<feature type="helix" evidence="11">
    <location>
        <begin position="145"/>
        <end position="147"/>
    </location>
</feature>
<feature type="helix" evidence="11">
    <location>
        <begin position="162"/>
        <end position="171"/>
    </location>
</feature>
<gene>
    <name type="primary">MGMT</name>
</gene>
<keyword id="KW-0002">3D-structure</keyword>
<keyword id="KW-0903">Direct protein sequencing</keyword>
<keyword id="KW-0227">DNA damage</keyword>
<keyword id="KW-0234">DNA repair</keyword>
<keyword id="KW-0238">DNA-binding</keyword>
<keyword id="KW-0479">Metal-binding</keyword>
<keyword id="KW-0489">Methyltransferase</keyword>
<keyword id="KW-0539">Nucleus</keyword>
<keyword id="KW-0597">Phosphoprotein</keyword>
<keyword id="KW-1267">Proteomics identification</keyword>
<keyword id="KW-1185">Reference proteome</keyword>
<keyword id="KW-0808">Transferase</keyword>
<keyword id="KW-0862">Zinc</keyword>
<protein>
    <recommendedName>
        <fullName>Methylated-DNA--protein-cysteine methyltransferase</fullName>
        <ecNumber>2.1.1.63</ecNumber>
    </recommendedName>
    <alternativeName>
        <fullName>6-O-methylguanine-DNA methyltransferase</fullName>
        <shortName>MGMT</shortName>
    </alternativeName>
    <alternativeName>
        <fullName>O-6-methylguanine-DNA-alkyltransferase</fullName>
    </alternativeName>
</protein>